<name>SYR_TREPS</name>
<keyword id="KW-0030">Aminoacyl-tRNA synthetase</keyword>
<keyword id="KW-0067">ATP-binding</keyword>
<keyword id="KW-0963">Cytoplasm</keyword>
<keyword id="KW-0436">Ligase</keyword>
<keyword id="KW-0547">Nucleotide-binding</keyword>
<keyword id="KW-0648">Protein biosynthesis</keyword>
<sequence>MQDLCEMWRHAVARVLSQLQGPAVEPVEGAQLVMEEPPEPGMGDIAFPLFLFAKRVRRSPAQLAQQLCTLLEEDTSMCAYGTPQARGPYLNVFLNKECVAAHTLDAIFAQGERYGHTQYLQGKRIMVEFSSPNTNKPLHVGHLRNNAIGESLSRIIAFCGADVFKVNIINDRGVHICKSMCAYQKFAHGKTPAHTGIKSDRFVGDWYVQFNRYAQQYPEEAEHDVRDLLQRWESADPHVRALWRTMNEWALRGIKQTYERTGISFDKLYFESETYTKGREEVRRGLACGVFYQMEDNSIWVDLSSLGLDKKALLRSDGTTMYITQDIGTAIFRAQDWPFDQLLYVVGNEQNYHFKVLFFVLRLLGYPWAQQLHHVSYGMVNLPHGRMKSREGTVVDADDILDRLHSAAEEEIAKKGRENALKHAQCIAENVAIAALHYFLLQVSPQKDMVFHPEESLSFNGNTGPYLQYMGARISSLLKKVQEDVEQKGPREVRCDPALLTHEAEWELVKALARFPACVTRAAQGHDPSVITGYLYTLSKSFSRFYHDCPILCEARPDYACARLELVRAVRIVLRTAMRLVLIPFLEEM</sequence>
<organism>
    <name type="scientific">Treponema pallidum subsp. pallidum (strain SS14)</name>
    <dbReference type="NCBI Taxonomy" id="455434"/>
    <lineage>
        <taxon>Bacteria</taxon>
        <taxon>Pseudomonadati</taxon>
        <taxon>Spirochaetota</taxon>
        <taxon>Spirochaetia</taxon>
        <taxon>Spirochaetales</taxon>
        <taxon>Treponemataceae</taxon>
        <taxon>Treponema</taxon>
    </lineage>
</organism>
<feature type="chain" id="PRO_1000095417" description="Arginine--tRNA ligase">
    <location>
        <begin position="1"/>
        <end position="589"/>
    </location>
</feature>
<feature type="short sequence motif" description="'HIGH' region">
    <location>
        <begin position="132"/>
        <end position="142"/>
    </location>
</feature>
<evidence type="ECO:0000255" key="1">
    <source>
        <dbReference type="HAMAP-Rule" id="MF_00123"/>
    </source>
</evidence>
<reference key="1">
    <citation type="journal article" date="2008" name="BMC Microbiol.">
        <title>Complete genome sequence of Treponema pallidum ssp. pallidum strain SS14 determined with oligonucleotide arrays.</title>
        <authorList>
            <person name="Matejkova P."/>
            <person name="Strouhal M."/>
            <person name="Smajs D."/>
            <person name="Norris S.J."/>
            <person name="Palzkill T."/>
            <person name="Petrosino J.F."/>
            <person name="Sodergren E."/>
            <person name="Norton J.E."/>
            <person name="Singh J."/>
            <person name="Richmond T.A."/>
            <person name="Molla M.N."/>
            <person name="Albert T.J."/>
            <person name="Weinstock G.M."/>
        </authorList>
    </citation>
    <scope>NUCLEOTIDE SEQUENCE [LARGE SCALE GENOMIC DNA]</scope>
    <source>
        <strain>SS14</strain>
    </source>
</reference>
<accession>B2S469</accession>
<protein>
    <recommendedName>
        <fullName evidence="1">Arginine--tRNA ligase</fullName>
        <ecNumber evidence="1">6.1.1.19</ecNumber>
    </recommendedName>
    <alternativeName>
        <fullName evidence="1">Arginyl-tRNA synthetase</fullName>
        <shortName evidence="1">ArgRS</shortName>
    </alternativeName>
</protein>
<gene>
    <name evidence="1" type="primary">argS</name>
    <name type="ordered locus">TPASS_0831</name>
</gene>
<proteinExistence type="inferred from homology"/>
<comment type="catalytic activity">
    <reaction evidence="1">
        <text>tRNA(Arg) + L-arginine + ATP = L-arginyl-tRNA(Arg) + AMP + diphosphate</text>
        <dbReference type="Rhea" id="RHEA:20301"/>
        <dbReference type="Rhea" id="RHEA-COMP:9658"/>
        <dbReference type="Rhea" id="RHEA-COMP:9673"/>
        <dbReference type="ChEBI" id="CHEBI:30616"/>
        <dbReference type="ChEBI" id="CHEBI:32682"/>
        <dbReference type="ChEBI" id="CHEBI:33019"/>
        <dbReference type="ChEBI" id="CHEBI:78442"/>
        <dbReference type="ChEBI" id="CHEBI:78513"/>
        <dbReference type="ChEBI" id="CHEBI:456215"/>
        <dbReference type="EC" id="6.1.1.19"/>
    </reaction>
</comment>
<comment type="subunit">
    <text evidence="1">Monomer.</text>
</comment>
<comment type="subcellular location">
    <subcellularLocation>
        <location evidence="1">Cytoplasm</location>
    </subcellularLocation>
</comment>
<comment type="similarity">
    <text evidence="1">Belongs to the class-I aminoacyl-tRNA synthetase family.</text>
</comment>
<dbReference type="EC" id="6.1.1.19" evidence="1"/>
<dbReference type="EMBL" id="CP000805">
    <property type="protein sequence ID" value="ACD71248.1"/>
    <property type="molecule type" value="Genomic_DNA"/>
</dbReference>
<dbReference type="RefSeq" id="WP_010882275.1">
    <property type="nucleotide sequence ID" value="NC_021508.1"/>
</dbReference>
<dbReference type="SMR" id="B2S469"/>
<dbReference type="GeneID" id="93876589"/>
<dbReference type="KEGG" id="tpp:TPASS_0831"/>
<dbReference type="PATRIC" id="fig|455434.6.peg.820"/>
<dbReference type="Proteomes" id="UP000001202">
    <property type="component" value="Chromosome"/>
</dbReference>
<dbReference type="GO" id="GO:0005737">
    <property type="term" value="C:cytoplasm"/>
    <property type="evidence" value="ECO:0007669"/>
    <property type="project" value="UniProtKB-SubCell"/>
</dbReference>
<dbReference type="GO" id="GO:0004814">
    <property type="term" value="F:arginine-tRNA ligase activity"/>
    <property type="evidence" value="ECO:0007669"/>
    <property type="project" value="UniProtKB-UniRule"/>
</dbReference>
<dbReference type="GO" id="GO:0005524">
    <property type="term" value="F:ATP binding"/>
    <property type="evidence" value="ECO:0007669"/>
    <property type="project" value="UniProtKB-UniRule"/>
</dbReference>
<dbReference type="GO" id="GO:0006420">
    <property type="term" value="P:arginyl-tRNA aminoacylation"/>
    <property type="evidence" value="ECO:0007669"/>
    <property type="project" value="UniProtKB-UniRule"/>
</dbReference>
<dbReference type="CDD" id="cd00671">
    <property type="entry name" value="ArgRS_core"/>
    <property type="match status" value="1"/>
</dbReference>
<dbReference type="FunFam" id="1.10.730.10:FF:000006">
    <property type="entry name" value="Arginyl-tRNA synthetase 2, mitochondrial"/>
    <property type="match status" value="1"/>
</dbReference>
<dbReference type="Gene3D" id="3.30.1360.70">
    <property type="entry name" value="Arginyl tRNA synthetase N-terminal domain"/>
    <property type="match status" value="1"/>
</dbReference>
<dbReference type="Gene3D" id="3.40.50.620">
    <property type="entry name" value="HUPs"/>
    <property type="match status" value="1"/>
</dbReference>
<dbReference type="Gene3D" id="1.10.730.10">
    <property type="entry name" value="Isoleucyl-tRNA Synthetase, Domain 1"/>
    <property type="match status" value="1"/>
</dbReference>
<dbReference type="HAMAP" id="MF_00123">
    <property type="entry name" value="Arg_tRNA_synth"/>
    <property type="match status" value="1"/>
</dbReference>
<dbReference type="InterPro" id="IPR001412">
    <property type="entry name" value="aa-tRNA-synth_I_CS"/>
</dbReference>
<dbReference type="InterPro" id="IPR001278">
    <property type="entry name" value="Arg-tRNA-ligase"/>
</dbReference>
<dbReference type="InterPro" id="IPR005148">
    <property type="entry name" value="Arg-tRNA-synth_N"/>
</dbReference>
<dbReference type="InterPro" id="IPR036695">
    <property type="entry name" value="Arg-tRNA-synth_N_sf"/>
</dbReference>
<dbReference type="InterPro" id="IPR035684">
    <property type="entry name" value="ArgRS_core"/>
</dbReference>
<dbReference type="InterPro" id="IPR008909">
    <property type="entry name" value="DALR_anticod-bd"/>
</dbReference>
<dbReference type="InterPro" id="IPR014729">
    <property type="entry name" value="Rossmann-like_a/b/a_fold"/>
</dbReference>
<dbReference type="InterPro" id="IPR009080">
    <property type="entry name" value="tRNAsynth_Ia_anticodon-bd"/>
</dbReference>
<dbReference type="NCBIfam" id="TIGR00456">
    <property type="entry name" value="argS"/>
    <property type="match status" value="1"/>
</dbReference>
<dbReference type="PANTHER" id="PTHR11956:SF5">
    <property type="entry name" value="ARGININE--TRNA LIGASE, CYTOPLASMIC"/>
    <property type="match status" value="1"/>
</dbReference>
<dbReference type="PANTHER" id="PTHR11956">
    <property type="entry name" value="ARGINYL-TRNA SYNTHETASE"/>
    <property type="match status" value="1"/>
</dbReference>
<dbReference type="Pfam" id="PF03485">
    <property type="entry name" value="Arg_tRNA_synt_N"/>
    <property type="match status" value="1"/>
</dbReference>
<dbReference type="Pfam" id="PF05746">
    <property type="entry name" value="DALR_1"/>
    <property type="match status" value="1"/>
</dbReference>
<dbReference type="Pfam" id="PF00750">
    <property type="entry name" value="tRNA-synt_1d"/>
    <property type="match status" value="1"/>
</dbReference>
<dbReference type="PRINTS" id="PR01038">
    <property type="entry name" value="TRNASYNTHARG"/>
</dbReference>
<dbReference type="SMART" id="SM01016">
    <property type="entry name" value="Arg_tRNA_synt_N"/>
    <property type="match status" value="1"/>
</dbReference>
<dbReference type="SMART" id="SM00836">
    <property type="entry name" value="DALR_1"/>
    <property type="match status" value="1"/>
</dbReference>
<dbReference type="SUPFAM" id="SSF47323">
    <property type="entry name" value="Anticodon-binding domain of a subclass of class I aminoacyl-tRNA synthetases"/>
    <property type="match status" value="1"/>
</dbReference>
<dbReference type="SUPFAM" id="SSF55190">
    <property type="entry name" value="Arginyl-tRNA synthetase (ArgRS), N-terminal 'additional' domain"/>
    <property type="match status" value="1"/>
</dbReference>
<dbReference type="SUPFAM" id="SSF52374">
    <property type="entry name" value="Nucleotidylyl transferase"/>
    <property type="match status" value="1"/>
</dbReference>
<dbReference type="PROSITE" id="PS00178">
    <property type="entry name" value="AA_TRNA_LIGASE_I"/>
    <property type="match status" value="1"/>
</dbReference>